<proteinExistence type="inferred from homology"/>
<accession>A8LPC4</accession>
<keyword id="KW-0963">Cytoplasm</keyword>
<keyword id="KW-0489">Methyltransferase</keyword>
<keyword id="KW-1185">Reference proteome</keyword>
<keyword id="KW-0698">rRNA processing</keyword>
<keyword id="KW-0949">S-adenosyl-L-methionine</keyword>
<keyword id="KW-0808">Transferase</keyword>
<evidence type="ECO:0000255" key="1">
    <source>
        <dbReference type="HAMAP-Rule" id="MF_00074"/>
    </source>
</evidence>
<reference key="1">
    <citation type="journal article" date="2010" name="ISME J.">
        <title>The complete genome sequence of the algal symbiont Dinoroseobacter shibae: a hitchhiker's guide to life in the sea.</title>
        <authorList>
            <person name="Wagner-Dobler I."/>
            <person name="Ballhausen B."/>
            <person name="Berger M."/>
            <person name="Brinkhoff T."/>
            <person name="Buchholz I."/>
            <person name="Bunk B."/>
            <person name="Cypionka H."/>
            <person name="Daniel R."/>
            <person name="Drepper T."/>
            <person name="Gerdts G."/>
            <person name="Hahnke S."/>
            <person name="Han C."/>
            <person name="Jahn D."/>
            <person name="Kalhoefer D."/>
            <person name="Kiss H."/>
            <person name="Klenk H.P."/>
            <person name="Kyrpides N."/>
            <person name="Liebl W."/>
            <person name="Liesegang H."/>
            <person name="Meincke L."/>
            <person name="Pati A."/>
            <person name="Petersen J."/>
            <person name="Piekarski T."/>
            <person name="Pommerenke C."/>
            <person name="Pradella S."/>
            <person name="Pukall R."/>
            <person name="Rabus R."/>
            <person name="Stackebrandt E."/>
            <person name="Thole S."/>
            <person name="Thompson L."/>
            <person name="Tielen P."/>
            <person name="Tomasch J."/>
            <person name="von Jan M."/>
            <person name="Wanphrut N."/>
            <person name="Wichels A."/>
            <person name="Zech H."/>
            <person name="Simon M."/>
        </authorList>
    </citation>
    <scope>NUCLEOTIDE SEQUENCE [LARGE SCALE GENOMIC DNA]</scope>
    <source>
        <strain>DSM 16493 / NCIMB 14021 / DFL 12</strain>
    </source>
</reference>
<sequence>MDAASRCDLKVFERLIRKWSPRINLVAPSTYDQTWERHILDSAQLYDFLPSTADKVIDLGSGGGLPVVVLGVLAKHRGCRIKFTAIESDARKCAFLRTAARELQINLSVITSRIEAANVEPGNVITARALAPVSKLLEFAEPLRVAGGTCLFLKGENVQNEVSEAKNSWQFEAKYYPSVTSEKSAILEIGEFYRA</sequence>
<comment type="function">
    <text evidence="1">Specifically methylates the N7 position of guanine in position 527 of 16S rRNA.</text>
</comment>
<comment type="catalytic activity">
    <reaction evidence="1">
        <text>guanosine(527) in 16S rRNA + S-adenosyl-L-methionine = N(7)-methylguanosine(527) in 16S rRNA + S-adenosyl-L-homocysteine</text>
        <dbReference type="Rhea" id="RHEA:42732"/>
        <dbReference type="Rhea" id="RHEA-COMP:10209"/>
        <dbReference type="Rhea" id="RHEA-COMP:10210"/>
        <dbReference type="ChEBI" id="CHEBI:57856"/>
        <dbReference type="ChEBI" id="CHEBI:59789"/>
        <dbReference type="ChEBI" id="CHEBI:74269"/>
        <dbReference type="ChEBI" id="CHEBI:74480"/>
        <dbReference type="EC" id="2.1.1.170"/>
    </reaction>
</comment>
<comment type="subcellular location">
    <subcellularLocation>
        <location evidence="1">Cytoplasm</location>
    </subcellularLocation>
</comment>
<comment type="similarity">
    <text evidence="1">Belongs to the methyltransferase superfamily. RNA methyltransferase RsmG family.</text>
</comment>
<protein>
    <recommendedName>
        <fullName evidence="1">Ribosomal RNA small subunit methyltransferase G</fullName>
        <ecNumber evidence="1">2.1.1.170</ecNumber>
    </recommendedName>
    <alternativeName>
        <fullName evidence="1">16S rRNA 7-methylguanosine methyltransferase</fullName>
        <shortName evidence="1">16S rRNA m7G methyltransferase</shortName>
    </alternativeName>
</protein>
<dbReference type="EC" id="2.1.1.170" evidence="1"/>
<dbReference type="EMBL" id="CP000830">
    <property type="protein sequence ID" value="ABV95189.1"/>
    <property type="molecule type" value="Genomic_DNA"/>
</dbReference>
<dbReference type="RefSeq" id="WP_012180113.1">
    <property type="nucleotide sequence ID" value="NC_009952.1"/>
</dbReference>
<dbReference type="SMR" id="A8LPC4"/>
<dbReference type="STRING" id="398580.Dshi_3456"/>
<dbReference type="KEGG" id="dsh:Dshi_3456"/>
<dbReference type="eggNOG" id="COG0357">
    <property type="taxonomic scope" value="Bacteria"/>
</dbReference>
<dbReference type="HOGENOM" id="CLU_065341_1_1_5"/>
<dbReference type="OrthoDB" id="9808773at2"/>
<dbReference type="Proteomes" id="UP000006833">
    <property type="component" value="Chromosome"/>
</dbReference>
<dbReference type="GO" id="GO:0005829">
    <property type="term" value="C:cytosol"/>
    <property type="evidence" value="ECO:0007669"/>
    <property type="project" value="TreeGrafter"/>
</dbReference>
<dbReference type="GO" id="GO:0070043">
    <property type="term" value="F:rRNA (guanine-N7-)-methyltransferase activity"/>
    <property type="evidence" value="ECO:0007669"/>
    <property type="project" value="UniProtKB-UniRule"/>
</dbReference>
<dbReference type="Gene3D" id="3.40.50.150">
    <property type="entry name" value="Vaccinia Virus protein VP39"/>
    <property type="match status" value="1"/>
</dbReference>
<dbReference type="HAMAP" id="MF_00074">
    <property type="entry name" value="16SrRNA_methyltr_G"/>
    <property type="match status" value="1"/>
</dbReference>
<dbReference type="InterPro" id="IPR003682">
    <property type="entry name" value="rRNA_ssu_MeTfrase_G"/>
</dbReference>
<dbReference type="InterPro" id="IPR029063">
    <property type="entry name" value="SAM-dependent_MTases_sf"/>
</dbReference>
<dbReference type="NCBIfam" id="TIGR00138">
    <property type="entry name" value="rsmG_gidB"/>
    <property type="match status" value="1"/>
</dbReference>
<dbReference type="PANTHER" id="PTHR31760">
    <property type="entry name" value="S-ADENOSYL-L-METHIONINE-DEPENDENT METHYLTRANSFERASES SUPERFAMILY PROTEIN"/>
    <property type="match status" value="1"/>
</dbReference>
<dbReference type="PANTHER" id="PTHR31760:SF0">
    <property type="entry name" value="S-ADENOSYL-L-METHIONINE-DEPENDENT METHYLTRANSFERASES SUPERFAMILY PROTEIN"/>
    <property type="match status" value="1"/>
</dbReference>
<dbReference type="Pfam" id="PF02527">
    <property type="entry name" value="GidB"/>
    <property type="match status" value="1"/>
</dbReference>
<dbReference type="PIRSF" id="PIRSF003078">
    <property type="entry name" value="GidB"/>
    <property type="match status" value="1"/>
</dbReference>
<dbReference type="SUPFAM" id="SSF53335">
    <property type="entry name" value="S-adenosyl-L-methionine-dependent methyltransferases"/>
    <property type="match status" value="1"/>
</dbReference>
<name>RSMG_DINSH</name>
<feature type="chain" id="PRO_0000335349" description="Ribosomal RNA small subunit methyltransferase G">
    <location>
        <begin position="1"/>
        <end position="195"/>
    </location>
</feature>
<feature type="binding site" evidence="1">
    <location>
        <position position="60"/>
    </location>
    <ligand>
        <name>S-adenosyl-L-methionine</name>
        <dbReference type="ChEBI" id="CHEBI:59789"/>
    </ligand>
</feature>
<feature type="binding site" evidence="1">
    <location>
        <position position="65"/>
    </location>
    <ligand>
        <name>S-adenosyl-L-methionine</name>
        <dbReference type="ChEBI" id="CHEBI:59789"/>
    </ligand>
</feature>
<feature type="binding site" evidence="1">
    <location>
        <begin position="114"/>
        <end position="115"/>
    </location>
    <ligand>
        <name>S-adenosyl-L-methionine</name>
        <dbReference type="ChEBI" id="CHEBI:59789"/>
    </ligand>
</feature>
<feature type="binding site" evidence="1">
    <location>
        <position position="128"/>
    </location>
    <ligand>
        <name>S-adenosyl-L-methionine</name>
        <dbReference type="ChEBI" id="CHEBI:59789"/>
    </ligand>
</feature>
<organism>
    <name type="scientific">Dinoroseobacter shibae (strain DSM 16493 / NCIMB 14021 / DFL 12)</name>
    <dbReference type="NCBI Taxonomy" id="398580"/>
    <lineage>
        <taxon>Bacteria</taxon>
        <taxon>Pseudomonadati</taxon>
        <taxon>Pseudomonadota</taxon>
        <taxon>Alphaproteobacteria</taxon>
        <taxon>Rhodobacterales</taxon>
        <taxon>Roseobacteraceae</taxon>
        <taxon>Dinoroseobacter</taxon>
    </lineage>
</organism>
<gene>
    <name evidence="1" type="primary">rsmG</name>
    <name type="ordered locus">Dshi_3456</name>
</gene>